<accession>A3PFA5</accession>
<reference key="1">
    <citation type="journal article" date="2007" name="PLoS Genet.">
        <title>Patterns and implications of gene gain and loss in the evolution of Prochlorococcus.</title>
        <authorList>
            <person name="Kettler G.C."/>
            <person name="Martiny A.C."/>
            <person name="Huang K."/>
            <person name="Zucker J."/>
            <person name="Coleman M.L."/>
            <person name="Rodrigue S."/>
            <person name="Chen F."/>
            <person name="Lapidus A."/>
            <person name="Ferriera S."/>
            <person name="Johnson J."/>
            <person name="Steglich C."/>
            <person name="Church G.M."/>
            <person name="Richardson P."/>
            <person name="Chisholm S.W."/>
        </authorList>
    </citation>
    <scope>NUCLEOTIDE SEQUENCE [LARGE SCALE GENOMIC DNA]</scope>
    <source>
        <strain>MIT 9301</strain>
    </source>
</reference>
<gene>
    <name evidence="1" type="primary">ruvB</name>
    <name type="ordered locus">P9301_18071</name>
</gene>
<organism>
    <name type="scientific">Prochlorococcus marinus (strain MIT 9301)</name>
    <dbReference type="NCBI Taxonomy" id="167546"/>
    <lineage>
        <taxon>Bacteria</taxon>
        <taxon>Bacillati</taxon>
        <taxon>Cyanobacteriota</taxon>
        <taxon>Cyanophyceae</taxon>
        <taxon>Synechococcales</taxon>
        <taxon>Prochlorococcaceae</taxon>
        <taxon>Prochlorococcus</taxon>
    </lineage>
</organism>
<proteinExistence type="inferred from homology"/>
<feature type="chain" id="PRO_1000001441" description="Holliday junction branch migration complex subunit RuvB">
    <location>
        <begin position="1"/>
        <end position="352"/>
    </location>
</feature>
<feature type="region of interest" description="Large ATPase domain (RuvB-L)" evidence="1">
    <location>
        <begin position="13"/>
        <end position="201"/>
    </location>
</feature>
<feature type="region of interest" description="Small ATPAse domain (RuvB-S)" evidence="1">
    <location>
        <begin position="202"/>
        <end position="273"/>
    </location>
</feature>
<feature type="region of interest" description="Head domain (RuvB-H)" evidence="1">
    <location>
        <begin position="276"/>
        <end position="352"/>
    </location>
</feature>
<feature type="binding site" evidence="1">
    <location>
        <position position="41"/>
    </location>
    <ligand>
        <name>ATP</name>
        <dbReference type="ChEBI" id="CHEBI:30616"/>
    </ligand>
</feature>
<feature type="binding site" evidence="1">
    <location>
        <position position="82"/>
    </location>
    <ligand>
        <name>ATP</name>
        <dbReference type="ChEBI" id="CHEBI:30616"/>
    </ligand>
</feature>
<feature type="binding site" evidence="1">
    <location>
        <position position="85"/>
    </location>
    <ligand>
        <name>ATP</name>
        <dbReference type="ChEBI" id="CHEBI:30616"/>
    </ligand>
</feature>
<feature type="binding site" evidence="1">
    <location>
        <position position="86"/>
    </location>
    <ligand>
        <name>ATP</name>
        <dbReference type="ChEBI" id="CHEBI:30616"/>
    </ligand>
</feature>
<feature type="binding site" evidence="1">
    <location>
        <position position="86"/>
    </location>
    <ligand>
        <name>Mg(2+)</name>
        <dbReference type="ChEBI" id="CHEBI:18420"/>
    </ligand>
</feature>
<feature type="binding site" evidence="1">
    <location>
        <position position="87"/>
    </location>
    <ligand>
        <name>ATP</name>
        <dbReference type="ChEBI" id="CHEBI:30616"/>
    </ligand>
</feature>
<feature type="binding site" evidence="1">
    <location>
        <begin position="148"/>
        <end position="150"/>
    </location>
    <ligand>
        <name>ATP</name>
        <dbReference type="ChEBI" id="CHEBI:30616"/>
    </ligand>
</feature>
<feature type="binding site" evidence="1">
    <location>
        <position position="191"/>
    </location>
    <ligand>
        <name>ATP</name>
        <dbReference type="ChEBI" id="CHEBI:30616"/>
    </ligand>
</feature>
<feature type="binding site" evidence="1">
    <location>
        <position position="201"/>
    </location>
    <ligand>
        <name>ATP</name>
        <dbReference type="ChEBI" id="CHEBI:30616"/>
    </ligand>
</feature>
<feature type="binding site" evidence="1">
    <location>
        <position position="238"/>
    </location>
    <ligand>
        <name>ATP</name>
        <dbReference type="ChEBI" id="CHEBI:30616"/>
    </ligand>
</feature>
<feature type="binding site" evidence="1">
    <location>
        <position position="330"/>
    </location>
    <ligand>
        <name>DNA</name>
        <dbReference type="ChEBI" id="CHEBI:16991"/>
    </ligand>
</feature>
<feature type="binding site" evidence="1">
    <location>
        <position position="335"/>
    </location>
    <ligand>
        <name>DNA</name>
        <dbReference type="ChEBI" id="CHEBI:16991"/>
    </ligand>
</feature>
<comment type="function">
    <text evidence="1">The RuvA-RuvB-RuvC complex processes Holliday junction (HJ) DNA during genetic recombination and DNA repair, while the RuvA-RuvB complex plays an important role in the rescue of blocked DNA replication forks via replication fork reversal (RFR). RuvA specifically binds to HJ cruciform DNA, conferring on it an open structure. The RuvB hexamer acts as an ATP-dependent pump, pulling dsDNA into and through the RuvAB complex. RuvB forms 2 homohexamers on either side of HJ DNA bound by 1 or 2 RuvA tetramers; 4 subunits per hexamer contact DNA at a time. Coordinated motions by a converter formed by DNA-disengaged RuvB subunits stimulates ATP hydrolysis and nucleotide exchange. Immobilization of the converter enables RuvB to convert the ATP-contained energy into a lever motion, pulling 2 nucleotides of DNA out of the RuvA tetramer per ATP hydrolyzed, thus driving DNA branch migration. The RuvB motors rotate together with the DNA substrate, which together with the progressing nucleotide cycle form the mechanistic basis for DNA recombination by continuous HJ branch migration. Branch migration allows RuvC to scan DNA until it finds its consensus sequence, where it cleaves and resolves cruciform DNA.</text>
</comment>
<comment type="catalytic activity">
    <reaction evidence="1">
        <text>ATP + H2O = ADP + phosphate + H(+)</text>
        <dbReference type="Rhea" id="RHEA:13065"/>
        <dbReference type="ChEBI" id="CHEBI:15377"/>
        <dbReference type="ChEBI" id="CHEBI:15378"/>
        <dbReference type="ChEBI" id="CHEBI:30616"/>
        <dbReference type="ChEBI" id="CHEBI:43474"/>
        <dbReference type="ChEBI" id="CHEBI:456216"/>
    </reaction>
</comment>
<comment type="subunit">
    <text evidence="1">Homohexamer. Forms an RuvA(8)-RuvB(12)-Holliday junction (HJ) complex. HJ DNA is sandwiched between 2 RuvA tetramers; dsDNA enters through RuvA and exits via RuvB. An RuvB hexamer assembles on each DNA strand where it exits the tetramer. Each RuvB hexamer is contacted by two RuvA subunits (via domain III) on 2 adjacent RuvB subunits; this complex drives branch migration. In the full resolvosome a probable DNA-RuvA(4)-RuvB(12)-RuvC(2) complex forms which resolves the HJ.</text>
</comment>
<comment type="subcellular location">
    <subcellularLocation>
        <location evidence="1">Cytoplasm</location>
    </subcellularLocation>
</comment>
<comment type="domain">
    <text evidence="1">Has 3 domains, the large (RuvB-L) and small ATPase (RuvB-S) domains and the C-terminal head (RuvB-H) domain. The head domain binds DNA, while the ATPase domains jointly bind ATP, ADP or are empty depending on the state of the subunit in the translocation cycle. During a single DNA translocation step the structure of each domain remains the same, but their relative positions change.</text>
</comment>
<comment type="similarity">
    <text evidence="1">Belongs to the RuvB family.</text>
</comment>
<name>RUVB_PROM0</name>
<dbReference type="EC" id="3.6.4.-" evidence="1"/>
<dbReference type="EMBL" id="CP000576">
    <property type="protein sequence ID" value="ABO18430.1"/>
    <property type="molecule type" value="Genomic_DNA"/>
</dbReference>
<dbReference type="RefSeq" id="WP_011863715.1">
    <property type="nucleotide sequence ID" value="NC_009091.1"/>
</dbReference>
<dbReference type="SMR" id="A3PFA5"/>
<dbReference type="STRING" id="167546.P9301_18071"/>
<dbReference type="KEGG" id="pmg:P9301_18071"/>
<dbReference type="eggNOG" id="COG2255">
    <property type="taxonomic scope" value="Bacteria"/>
</dbReference>
<dbReference type="HOGENOM" id="CLU_055599_1_0_3"/>
<dbReference type="OrthoDB" id="9804478at2"/>
<dbReference type="Proteomes" id="UP000001430">
    <property type="component" value="Chromosome"/>
</dbReference>
<dbReference type="GO" id="GO:0005737">
    <property type="term" value="C:cytoplasm"/>
    <property type="evidence" value="ECO:0007669"/>
    <property type="project" value="UniProtKB-SubCell"/>
</dbReference>
<dbReference type="GO" id="GO:0048476">
    <property type="term" value="C:Holliday junction resolvase complex"/>
    <property type="evidence" value="ECO:0007669"/>
    <property type="project" value="UniProtKB-UniRule"/>
</dbReference>
<dbReference type="GO" id="GO:0005524">
    <property type="term" value="F:ATP binding"/>
    <property type="evidence" value="ECO:0007669"/>
    <property type="project" value="UniProtKB-UniRule"/>
</dbReference>
<dbReference type="GO" id="GO:0016887">
    <property type="term" value="F:ATP hydrolysis activity"/>
    <property type="evidence" value="ECO:0007669"/>
    <property type="project" value="InterPro"/>
</dbReference>
<dbReference type="GO" id="GO:0000400">
    <property type="term" value="F:four-way junction DNA binding"/>
    <property type="evidence" value="ECO:0007669"/>
    <property type="project" value="UniProtKB-UniRule"/>
</dbReference>
<dbReference type="GO" id="GO:0009378">
    <property type="term" value="F:four-way junction helicase activity"/>
    <property type="evidence" value="ECO:0007669"/>
    <property type="project" value="InterPro"/>
</dbReference>
<dbReference type="GO" id="GO:0006310">
    <property type="term" value="P:DNA recombination"/>
    <property type="evidence" value="ECO:0007669"/>
    <property type="project" value="UniProtKB-UniRule"/>
</dbReference>
<dbReference type="GO" id="GO:0006281">
    <property type="term" value="P:DNA repair"/>
    <property type="evidence" value="ECO:0007669"/>
    <property type="project" value="UniProtKB-UniRule"/>
</dbReference>
<dbReference type="CDD" id="cd00009">
    <property type="entry name" value="AAA"/>
    <property type="match status" value="1"/>
</dbReference>
<dbReference type="Gene3D" id="1.10.8.60">
    <property type="match status" value="1"/>
</dbReference>
<dbReference type="Gene3D" id="3.40.50.300">
    <property type="entry name" value="P-loop containing nucleotide triphosphate hydrolases"/>
    <property type="match status" value="1"/>
</dbReference>
<dbReference type="Gene3D" id="1.10.10.10">
    <property type="entry name" value="Winged helix-like DNA-binding domain superfamily/Winged helix DNA-binding domain"/>
    <property type="match status" value="1"/>
</dbReference>
<dbReference type="HAMAP" id="MF_00016">
    <property type="entry name" value="DNA_HJ_migration_RuvB"/>
    <property type="match status" value="1"/>
</dbReference>
<dbReference type="InterPro" id="IPR003593">
    <property type="entry name" value="AAA+_ATPase"/>
</dbReference>
<dbReference type="InterPro" id="IPR041445">
    <property type="entry name" value="AAA_lid_4"/>
</dbReference>
<dbReference type="InterPro" id="IPR004605">
    <property type="entry name" value="DNA_helicase_Holl-junc_RuvB"/>
</dbReference>
<dbReference type="InterPro" id="IPR027417">
    <property type="entry name" value="P-loop_NTPase"/>
</dbReference>
<dbReference type="InterPro" id="IPR008824">
    <property type="entry name" value="RuvB-like_N"/>
</dbReference>
<dbReference type="InterPro" id="IPR008823">
    <property type="entry name" value="RuvB_C"/>
</dbReference>
<dbReference type="InterPro" id="IPR036388">
    <property type="entry name" value="WH-like_DNA-bd_sf"/>
</dbReference>
<dbReference type="InterPro" id="IPR036390">
    <property type="entry name" value="WH_DNA-bd_sf"/>
</dbReference>
<dbReference type="NCBIfam" id="NF000868">
    <property type="entry name" value="PRK00080.1"/>
    <property type="match status" value="1"/>
</dbReference>
<dbReference type="NCBIfam" id="TIGR00635">
    <property type="entry name" value="ruvB"/>
    <property type="match status" value="1"/>
</dbReference>
<dbReference type="PANTHER" id="PTHR42848">
    <property type="match status" value="1"/>
</dbReference>
<dbReference type="PANTHER" id="PTHR42848:SF1">
    <property type="entry name" value="HOLLIDAY JUNCTION BRANCH MIGRATION COMPLEX SUBUNIT RUVB"/>
    <property type="match status" value="1"/>
</dbReference>
<dbReference type="Pfam" id="PF17864">
    <property type="entry name" value="AAA_lid_4"/>
    <property type="match status" value="1"/>
</dbReference>
<dbReference type="Pfam" id="PF05491">
    <property type="entry name" value="RuvB_C"/>
    <property type="match status" value="1"/>
</dbReference>
<dbReference type="Pfam" id="PF05496">
    <property type="entry name" value="RuvB_N"/>
    <property type="match status" value="1"/>
</dbReference>
<dbReference type="SMART" id="SM00382">
    <property type="entry name" value="AAA"/>
    <property type="match status" value="1"/>
</dbReference>
<dbReference type="SUPFAM" id="SSF52540">
    <property type="entry name" value="P-loop containing nucleoside triphosphate hydrolases"/>
    <property type="match status" value="1"/>
</dbReference>
<dbReference type="SUPFAM" id="SSF46785">
    <property type="entry name" value="Winged helix' DNA-binding domain"/>
    <property type="match status" value="1"/>
</dbReference>
<sequence>MAIISSNIGDNDLPLRKKELRLVDSKIIPEEKRNNNLNLARPLTLKEFIGQEQLKSSLRIAIDASIFRKEPLEHILLYGQPGLGKTTLAFLIAHELNTKCKIATAPAIERPRDIVGLLLGLKEGEVLFIDEIHRLNRLTEELLYSAMEDFRLDLTMGANKGTRCRTINLPRFTLIGATTKLASISAPLRDRFGISQKIEFYNYDELKQILLNFSRLINLNLDDEASYDLAKISRGTPRIALRLLRRVRDYAQVVMKTNTISVNLIKKALNSYQIDDKGLDSLDRHYLSFINQNNNIPIGLDSIAAGLGDDSSMLEFVVEPYLIKIGFLTRTPRGRLLTALGKKYIDSKNDDF</sequence>
<keyword id="KW-0067">ATP-binding</keyword>
<keyword id="KW-0963">Cytoplasm</keyword>
<keyword id="KW-0227">DNA damage</keyword>
<keyword id="KW-0233">DNA recombination</keyword>
<keyword id="KW-0234">DNA repair</keyword>
<keyword id="KW-0238">DNA-binding</keyword>
<keyword id="KW-0378">Hydrolase</keyword>
<keyword id="KW-0547">Nucleotide-binding</keyword>
<keyword id="KW-1185">Reference proteome</keyword>
<evidence type="ECO:0000255" key="1">
    <source>
        <dbReference type="HAMAP-Rule" id="MF_00016"/>
    </source>
</evidence>
<protein>
    <recommendedName>
        <fullName evidence="1">Holliday junction branch migration complex subunit RuvB</fullName>
        <ecNumber evidence="1">3.6.4.-</ecNumber>
    </recommendedName>
</protein>